<comment type="function">
    <text evidence="2">Catalyzes the hydroxylation of isoflavones, daidzein and formononetin, to yield 2'-hydroxyisoflavones, 2'-hydroxydaidzein, and 2'-hydroxyformononetin, respectively.</text>
</comment>
<comment type="catalytic activity">
    <reaction evidence="2">
        <text>a 2'-unsubstituted isoflavone + reduced [NADPH--hemoprotein reductase] + O2 = a 2'-hydroxyisoflavone + oxidized [NADPH--hemoprotein reductase] + H2O + H(+)</text>
        <dbReference type="Rhea" id="RHEA:18849"/>
        <dbReference type="Rhea" id="RHEA-COMP:11964"/>
        <dbReference type="Rhea" id="RHEA-COMP:11965"/>
        <dbReference type="ChEBI" id="CHEBI:15377"/>
        <dbReference type="ChEBI" id="CHEBI:15378"/>
        <dbReference type="ChEBI" id="CHEBI:15379"/>
        <dbReference type="ChEBI" id="CHEBI:28206"/>
        <dbReference type="ChEBI" id="CHEBI:57618"/>
        <dbReference type="ChEBI" id="CHEBI:58210"/>
        <dbReference type="ChEBI" id="CHEBI:136891"/>
        <dbReference type="EC" id="1.14.14.90"/>
    </reaction>
</comment>
<comment type="cofactor">
    <cofactor evidence="1">
        <name>heme</name>
        <dbReference type="ChEBI" id="CHEBI:30413"/>
    </cofactor>
</comment>
<comment type="subcellular location">
    <subcellularLocation>
        <location evidence="3">Membrane</location>
    </subcellularLocation>
</comment>
<comment type="induction">
    <text>By fungal elicitor.</text>
</comment>
<comment type="miscellaneous">
    <text>Involved in the biosynthesis of isoflavonoid-derived antimicrobial compounds of legumes.</text>
</comment>
<comment type="similarity">
    <text evidence="3">Belongs to the cytochrome P450 family.</text>
</comment>
<protein>
    <recommendedName>
        <fullName>Isoflavone 2'-hydroxylase</fullName>
        <ecNumber evidence="2">1.14.14.90</ecNumber>
    </recommendedName>
    <alternativeName>
        <fullName>CYP GE-3</fullName>
    </alternativeName>
    <alternativeName>
        <fullName>Cytochrome P450 81E1</fullName>
    </alternativeName>
    <alternativeName>
        <fullName>Cytochrome P450 91A4</fullName>
    </alternativeName>
</protein>
<keyword id="KW-0349">Heme</keyword>
<keyword id="KW-0408">Iron</keyword>
<keyword id="KW-0472">Membrane</keyword>
<keyword id="KW-0479">Metal-binding</keyword>
<keyword id="KW-0503">Monooxygenase</keyword>
<keyword id="KW-0560">Oxidoreductase</keyword>
<organism>
    <name type="scientific">Glycyrrhiza echinata</name>
    <name type="common">Licorice</name>
    <dbReference type="NCBI Taxonomy" id="46348"/>
    <lineage>
        <taxon>Eukaryota</taxon>
        <taxon>Viridiplantae</taxon>
        <taxon>Streptophyta</taxon>
        <taxon>Embryophyta</taxon>
        <taxon>Tracheophyta</taxon>
        <taxon>Spermatophyta</taxon>
        <taxon>Magnoliopsida</taxon>
        <taxon>eudicotyledons</taxon>
        <taxon>Gunneridae</taxon>
        <taxon>Pentapetalae</taxon>
        <taxon>rosids</taxon>
        <taxon>fabids</taxon>
        <taxon>Fabales</taxon>
        <taxon>Fabaceae</taxon>
        <taxon>Papilionoideae</taxon>
        <taxon>50 kb inversion clade</taxon>
        <taxon>NPAAA clade</taxon>
        <taxon>Hologalegina</taxon>
        <taxon>IRL clade</taxon>
        <taxon>Galegeae</taxon>
        <taxon>Glycyrrhiza</taxon>
    </lineage>
</organism>
<gene>
    <name type="primary">CYP81E1</name>
    <name type="synonym">CYP91A4</name>
</gene>
<feature type="chain" id="PRO_0000052160" description="Isoflavone 2'-hydroxylase">
    <location>
        <begin position="1"/>
        <end position="499"/>
    </location>
</feature>
<feature type="binding site" description="axial binding residue" evidence="1">
    <location>
        <position position="436"/>
    </location>
    <ligand>
        <name>heme</name>
        <dbReference type="ChEBI" id="CHEBI:30413"/>
    </ligand>
    <ligandPart>
        <name>Fe</name>
        <dbReference type="ChEBI" id="CHEBI:18248"/>
    </ligandPart>
</feature>
<name>C81E1_GLYEC</name>
<reference key="1">
    <citation type="online journal article" date="1997" name="Plant Gene Register">
        <title>Two new cytochrome P450 cDNAs from elicitor-induced Licorice (Glycyrrhiza echinata L.) cells.</title>
        <authorList>
            <person name="Akashi T."/>
            <person name="Aoki T."/>
            <person name="Kameya N."/>
            <person name="Nakamura I."/>
            <person name="Ayabe S."/>
        </authorList>
        <locator>PGR97-167</locator>
    </citation>
    <scope>NUCLEOTIDE SEQUENCE [MRNA]</scope>
</reference>
<reference key="2">
    <citation type="journal article" date="1998" name="Biochem. Biophys. Res. Commun.">
        <title>CYP81E1, a cytochrome P450 cDNA of licorice (Glycyrrhiza echinata L.), encodes isoflavone 2'-hydroxylase.</title>
        <authorList>
            <person name="Akashi T."/>
            <person name="Aoki T."/>
            <person name="Ayabe S."/>
        </authorList>
    </citation>
    <scope>FUNCTION</scope>
    <scope>CATALYTIC ACTIVITY</scope>
</reference>
<sequence>MEILSLLSYSVFYLALFFIFNIVIRARKFKNLPPGPPSLPIIGNLHHLKRPLHRTFKGLSEKYGHVFSLWFGSRLVVVVSSASEFQQCFTKNDVVLANRPRFLSGKYIFYNYTTLGSTSYGEHWRNLRRITALDVLSNHRINSFSGIRRDETQRLITRLADDSSTNFAEMELSSRLYDMTFNNIMRMISGKRYYGEDCDTSDLQEASQFRDMVSELLQLSGANNKTDFMPLLRFLDFENLEKRLKDISGKTDAFLRGLIEEHRTKKERANTMIDHLLNLQDSQPEYYTDQIIKGLALAMLLAGTDSSAVTLEWSMSNLLNHPEVLKKVKDELDTHVGQDRLVDESDLPKLTYLKNVINETLRLYTPAPLLLPHSTSDECNIGGYKVPQDTIVLINAWAIHRDPELWTEATTFKPERFEKKGELEKLIAFGMGRRACPGEGLAIRAISMTLALLIQCFDWKLINGDKIDLAERDGFTLTKLVPLKAMCKSRPVINKVFKQ</sequence>
<accession>P93147</accession>
<dbReference type="EC" id="1.14.14.90" evidence="2"/>
<dbReference type="EMBL" id="AB001379">
    <property type="protein sequence ID" value="BAA22422.1"/>
    <property type="molecule type" value="mRNA"/>
</dbReference>
<dbReference type="SMR" id="P93147"/>
<dbReference type="KEGG" id="ag:BAA22422"/>
<dbReference type="BRENDA" id="1.14.14.90">
    <property type="organism ID" value="2486"/>
</dbReference>
<dbReference type="GO" id="GO:0016020">
    <property type="term" value="C:membrane"/>
    <property type="evidence" value="ECO:0007669"/>
    <property type="project" value="UniProtKB-SubCell"/>
</dbReference>
<dbReference type="GO" id="GO:0020037">
    <property type="term" value="F:heme binding"/>
    <property type="evidence" value="ECO:0007669"/>
    <property type="project" value="InterPro"/>
</dbReference>
<dbReference type="GO" id="GO:0005506">
    <property type="term" value="F:iron ion binding"/>
    <property type="evidence" value="ECO:0007669"/>
    <property type="project" value="InterPro"/>
</dbReference>
<dbReference type="GO" id="GO:0033773">
    <property type="term" value="F:isoflavone 2'-hydroxylase activity"/>
    <property type="evidence" value="ECO:0007669"/>
    <property type="project" value="UniProtKB-EC"/>
</dbReference>
<dbReference type="CDD" id="cd20653">
    <property type="entry name" value="CYP81"/>
    <property type="match status" value="1"/>
</dbReference>
<dbReference type="FunFam" id="1.10.630.10:FF:000023">
    <property type="entry name" value="Cytochrome P450 family protein"/>
    <property type="match status" value="1"/>
</dbReference>
<dbReference type="Gene3D" id="1.10.630.10">
    <property type="entry name" value="Cytochrome P450"/>
    <property type="match status" value="1"/>
</dbReference>
<dbReference type="InterPro" id="IPR001128">
    <property type="entry name" value="Cyt_P450"/>
</dbReference>
<dbReference type="InterPro" id="IPR017972">
    <property type="entry name" value="Cyt_P450_CS"/>
</dbReference>
<dbReference type="InterPro" id="IPR002401">
    <property type="entry name" value="Cyt_P450_E_grp-I"/>
</dbReference>
<dbReference type="InterPro" id="IPR036396">
    <property type="entry name" value="Cyt_P450_sf"/>
</dbReference>
<dbReference type="InterPro" id="IPR050651">
    <property type="entry name" value="Plant_Cytochrome_P450_Monoox"/>
</dbReference>
<dbReference type="PANTHER" id="PTHR47947">
    <property type="entry name" value="CYTOCHROME P450 82C3-RELATED"/>
    <property type="match status" value="1"/>
</dbReference>
<dbReference type="PANTHER" id="PTHR47947:SF24">
    <property type="entry name" value="ISOFLAVONE 2'-HYDROXYLASE-LIKE"/>
    <property type="match status" value="1"/>
</dbReference>
<dbReference type="Pfam" id="PF00067">
    <property type="entry name" value="p450"/>
    <property type="match status" value="1"/>
</dbReference>
<dbReference type="PRINTS" id="PR00463">
    <property type="entry name" value="EP450I"/>
</dbReference>
<dbReference type="PRINTS" id="PR00385">
    <property type="entry name" value="P450"/>
</dbReference>
<dbReference type="SUPFAM" id="SSF48264">
    <property type="entry name" value="Cytochrome P450"/>
    <property type="match status" value="1"/>
</dbReference>
<dbReference type="PROSITE" id="PS00086">
    <property type="entry name" value="CYTOCHROME_P450"/>
    <property type="match status" value="1"/>
</dbReference>
<proteinExistence type="evidence at protein level"/>
<evidence type="ECO:0000250" key="1"/>
<evidence type="ECO:0000269" key="2">
    <source>
    </source>
</evidence>
<evidence type="ECO:0000305" key="3"/>